<gene>
    <name evidence="1" type="primary">glyS</name>
    <name type="ordered locus">ECH74115_4934</name>
</gene>
<feature type="chain" id="PRO_1000101277" description="Glycine--tRNA ligase beta subunit">
    <location>
        <begin position="1"/>
        <end position="689"/>
    </location>
</feature>
<sequence>MSEKTFLVEIGTEELPPKALRSLAESFAANFTAELDNAGLAHGTVQWFAAPRRLALKVANLAEAQPDREIEKRGPAIAQAFDAEGKPSKAAEGWARGCGITVDQAERLTTDKGEWLLYRAHVKGESTEALLPNMVATSLAKLPIPKLMRWGASDVHFVRPVHTVTLLLGDKVIPATILGIQSDRVIRGHRFMGEPEFTIDNADQYPEILRERGKVIADYEERKAKIKADAEEAARKIGGNADLSESLLEEVASLVEWPVVLTAKFEEKFLAVPSEALVYTMKGDQKYFPVYANDGKLLPNFIFVANIESKDPQQIISGNEKVVRPRLADAEFFFNTDRKKRLEDNLPRLQTVLFQQQLGTLRDKTDRIQALAGWIAEQIGADVNHATRAGLLSKCDLMTNMVFEFTDTQGVMGMHYARHDGEAEDVAVALNEQYQPRFAGDDLPSNPVACALAIADKMDTLAGIFGIGQHPKGDKDPFALRRAALGVLRIIVEKNLNLDLQTLTEEAVRLYGDKLTNANVVDDVIDFMLGRFRAWYQDEGYTVDTIQAVLARRPTRPADFDARMKAVSHFRTLEAAAALAAANKRVSNILAKSDEVLSDRVNASTLKEPEEIKLAMQVVVLRDKLEPYFAEGRYQDALVELAELREPVDAFFDKVMVMVDDKELRINRLTMLEKLRELFLRVADISLLQ</sequence>
<name>SYGB_ECO5E</name>
<accession>B5YVL1</accession>
<evidence type="ECO:0000255" key="1">
    <source>
        <dbReference type="HAMAP-Rule" id="MF_00255"/>
    </source>
</evidence>
<dbReference type="EC" id="6.1.1.14" evidence="1"/>
<dbReference type="EMBL" id="CP001164">
    <property type="protein sequence ID" value="ACI38550.1"/>
    <property type="molecule type" value="Genomic_DNA"/>
</dbReference>
<dbReference type="RefSeq" id="WP_001291788.1">
    <property type="nucleotide sequence ID" value="NC_011353.1"/>
</dbReference>
<dbReference type="SMR" id="B5YVL1"/>
<dbReference type="GeneID" id="75173758"/>
<dbReference type="KEGG" id="ecf:ECH74115_4934"/>
<dbReference type="HOGENOM" id="CLU_007220_2_2_6"/>
<dbReference type="GO" id="GO:0005829">
    <property type="term" value="C:cytosol"/>
    <property type="evidence" value="ECO:0007669"/>
    <property type="project" value="TreeGrafter"/>
</dbReference>
<dbReference type="GO" id="GO:0004814">
    <property type="term" value="F:arginine-tRNA ligase activity"/>
    <property type="evidence" value="ECO:0007669"/>
    <property type="project" value="InterPro"/>
</dbReference>
<dbReference type="GO" id="GO:0005524">
    <property type="term" value="F:ATP binding"/>
    <property type="evidence" value="ECO:0007669"/>
    <property type="project" value="UniProtKB-UniRule"/>
</dbReference>
<dbReference type="GO" id="GO:0004820">
    <property type="term" value="F:glycine-tRNA ligase activity"/>
    <property type="evidence" value="ECO:0007669"/>
    <property type="project" value="UniProtKB-UniRule"/>
</dbReference>
<dbReference type="GO" id="GO:0006420">
    <property type="term" value="P:arginyl-tRNA aminoacylation"/>
    <property type="evidence" value="ECO:0007669"/>
    <property type="project" value="InterPro"/>
</dbReference>
<dbReference type="GO" id="GO:0006426">
    <property type="term" value="P:glycyl-tRNA aminoacylation"/>
    <property type="evidence" value="ECO:0007669"/>
    <property type="project" value="UniProtKB-UniRule"/>
</dbReference>
<dbReference type="HAMAP" id="MF_00255">
    <property type="entry name" value="Gly_tRNA_synth_beta"/>
    <property type="match status" value="1"/>
</dbReference>
<dbReference type="InterPro" id="IPR008909">
    <property type="entry name" value="DALR_anticod-bd"/>
</dbReference>
<dbReference type="InterPro" id="IPR015944">
    <property type="entry name" value="Gly-tRNA-synth_bsu"/>
</dbReference>
<dbReference type="InterPro" id="IPR006194">
    <property type="entry name" value="Gly-tRNA-synth_heterodimer"/>
</dbReference>
<dbReference type="NCBIfam" id="TIGR00211">
    <property type="entry name" value="glyS"/>
    <property type="match status" value="1"/>
</dbReference>
<dbReference type="PANTHER" id="PTHR30075:SF2">
    <property type="entry name" value="GLYCINE--TRNA LIGASE, CHLOROPLASTIC_MITOCHONDRIAL 2"/>
    <property type="match status" value="1"/>
</dbReference>
<dbReference type="PANTHER" id="PTHR30075">
    <property type="entry name" value="GLYCYL-TRNA SYNTHETASE"/>
    <property type="match status" value="1"/>
</dbReference>
<dbReference type="Pfam" id="PF05746">
    <property type="entry name" value="DALR_1"/>
    <property type="match status" value="1"/>
</dbReference>
<dbReference type="Pfam" id="PF02092">
    <property type="entry name" value="tRNA_synt_2f"/>
    <property type="match status" value="1"/>
</dbReference>
<dbReference type="PRINTS" id="PR01045">
    <property type="entry name" value="TRNASYNTHGB"/>
</dbReference>
<dbReference type="SUPFAM" id="SSF109604">
    <property type="entry name" value="HD-domain/PDEase-like"/>
    <property type="match status" value="1"/>
</dbReference>
<dbReference type="PROSITE" id="PS50861">
    <property type="entry name" value="AA_TRNA_LIGASE_II_GLYAB"/>
    <property type="match status" value="1"/>
</dbReference>
<reference key="1">
    <citation type="journal article" date="2011" name="Proc. Natl. Acad. Sci. U.S.A.">
        <title>Genomic anatomy of Escherichia coli O157:H7 outbreaks.</title>
        <authorList>
            <person name="Eppinger M."/>
            <person name="Mammel M.K."/>
            <person name="Leclerc J.E."/>
            <person name="Ravel J."/>
            <person name="Cebula T.A."/>
        </authorList>
    </citation>
    <scope>NUCLEOTIDE SEQUENCE [LARGE SCALE GENOMIC DNA]</scope>
    <source>
        <strain>EC4115 / EHEC</strain>
    </source>
</reference>
<organism>
    <name type="scientific">Escherichia coli O157:H7 (strain EC4115 / EHEC)</name>
    <dbReference type="NCBI Taxonomy" id="444450"/>
    <lineage>
        <taxon>Bacteria</taxon>
        <taxon>Pseudomonadati</taxon>
        <taxon>Pseudomonadota</taxon>
        <taxon>Gammaproteobacteria</taxon>
        <taxon>Enterobacterales</taxon>
        <taxon>Enterobacteriaceae</taxon>
        <taxon>Escherichia</taxon>
    </lineage>
</organism>
<protein>
    <recommendedName>
        <fullName evidence="1">Glycine--tRNA ligase beta subunit</fullName>
        <ecNumber evidence="1">6.1.1.14</ecNumber>
    </recommendedName>
    <alternativeName>
        <fullName evidence="1">Glycyl-tRNA synthetase beta subunit</fullName>
        <shortName evidence="1">GlyRS</shortName>
    </alternativeName>
</protein>
<proteinExistence type="inferred from homology"/>
<comment type="catalytic activity">
    <reaction evidence="1">
        <text>tRNA(Gly) + glycine + ATP = glycyl-tRNA(Gly) + AMP + diphosphate</text>
        <dbReference type="Rhea" id="RHEA:16013"/>
        <dbReference type="Rhea" id="RHEA-COMP:9664"/>
        <dbReference type="Rhea" id="RHEA-COMP:9683"/>
        <dbReference type="ChEBI" id="CHEBI:30616"/>
        <dbReference type="ChEBI" id="CHEBI:33019"/>
        <dbReference type="ChEBI" id="CHEBI:57305"/>
        <dbReference type="ChEBI" id="CHEBI:78442"/>
        <dbReference type="ChEBI" id="CHEBI:78522"/>
        <dbReference type="ChEBI" id="CHEBI:456215"/>
        <dbReference type="EC" id="6.1.1.14"/>
    </reaction>
</comment>
<comment type="subunit">
    <text evidence="1">Tetramer of two alpha and two beta subunits.</text>
</comment>
<comment type="subcellular location">
    <subcellularLocation>
        <location evidence="1">Cytoplasm</location>
    </subcellularLocation>
</comment>
<comment type="similarity">
    <text evidence="1">Belongs to the class-II aminoacyl-tRNA synthetase family.</text>
</comment>
<keyword id="KW-0030">Aminoacyl-tRNA synthetase</keyword>
<keyword id="KW-0067">ATP-binding</keyword>
<keyword id="KW-0963">Cytoplasm</keyword>
<keyword id="KW-0436">Ligase</keyword>
<keyword id="KW-0547">Nucleotide-binding</keyword>
<keyword id="KW-0648">Protein biosynthesis</keyword>